<accession>P9WNU9</accession>
<accession>L0TBE2</accession>
<accession>O33247</accession>
<accession>Q8VJQ0</accession>
<name>DOP_MYCTU</name>
<comment type="function">
    <text evidence="2 3 4">Specifically catalyzes the deamidation of the C-terminal glutamine of the prokaryotic ubiquitin-like protein Pup to glutamate, thereby rendering Pup competent for conjugation. Also displays depupylase (DPUP) activity, removing conjugated Pup from target proteins; is thus involved in the recycling of Pup and may function similarly to deubiquitinases (DUBs) in eukaryotes to prevent or promote proteasomal degradation of certain proteins.</text>
</comment>
<comment type="catalytic activity">
    <reaction evidence="2 4">
        <text>[prokaryotic ubiquitin-like protein]-C-terminal-L-glutamine + H2O = [prokaryotic ubiquitin-like protein]-C-terminal-L-glutamate + NH4(+)</text>
        <dbReference type="Rhea" id="RHEA:47952"/>
        <dbReference type="Rhea" id="RHEA-COMP:11959"/>
        <dbReference type="Rhea" id="RHEA-COMP:11960"/>
        <dbReference type="ChEBI" id="CHEBI:15377"/>
        <dbReference type="ChEBI" id="CHEBI:28938"/>
        <dbReference type="ChEBI" id="CHEBI:78525"/>
        <dbReference type="ChEBI" id="CHEBI:88115"/>
        <dbReference type="EC" id="3.5.1.119"/>
    </reaction>
</comment>
<comment type="cofactor">
    <cofactor evidence="2 4">
        <name>ATP</name>
        <dbReference type="ChEBI" id="CHEBI:30616"/>
    </cofactor>
    <text evidence="2 4">ATP is required for the deamidation and depupylation reactions but is not hydrolyzed during the reactions.</text>
</comment>
<comment type="pathway">
    <text>Protein degradation; proteasomal Pup-dependent pathway.</text>
</comment>
<comment type="subunit">
    <text evidence="2 3">Interacts with the prokaryotic ubiquitin-like protein Pup.</text>
</comment>
<comment type="disruption phenotype">
    <text evidence="3 4">Disruption of dop abolishes pupylation. Cells lacking this gene also become hypersensitive to reactive nitrogen intermediates (RNI) and are severely attenuated for survival and growth in mice. They also cannot depupylate proteasome substrates.</text>
</comment>
<comment type="similarity">
    <text evidence="5">Belongs to the Pup ligase/Pup deamidase family. Pup deamidase subfamily.</text>
</comment>
<comment type="sequence caution" evidence="5">
    <conflict type="erroneous initiation">
        <sequence resource="EMBL-CDS" id="CCP44887"/>
    </conflict>
    <text>Extended N-terminus.</text>
</comment>
<dbReference type="EC" id="3.4.-.-"/>
<dbReference type="EC" id="3.5.1.119" evidence="2 4"/>
<dbReference type="EMBL" id="AL123456">
    <property type="protein sequence ID" value="CCP44887.1"/>
    <property type="status" value="ALT_INIT"/>
    <property type="molecule type" value="Genomic_DNA"/>
</dbReference>
<dbReference type="PIR" id="C70512">
    <property type="entry name" value="C70512"/>
</dbReference>
<dbReference type="RefSeq" id="NP_216628.1">
    <property type="nucleotide sequence ID" value="NC_000962.3"/>
</dbReference>
<dbReference type="RefSeq" id="WP_003411029.1">
    <property type="nucleotide sequence ID" value="NZ_NVQJ01000058.1"/>
</dbReference>
<dbReference type="RefSeq" id="WP_003899176.1">
    <property type="nucleotide sequence ID" value="NC_000962.3"/>
</dbReference>
<dbReference type="PDB" id="9CKU">
    <property type="method" value="EM"/>
    <property type="resolution" value="2.04 A"/>
    <property type="chains" value="G=1-501"/>
</dbReference>
<dbReference type="PDBsum" id="9CKU"/>
<dbReference type="SMR" id="P9WNU9"/>
<dbReference type="STRING" id="83332.Rv2112c"/>
<dbReference type="PaxDb" id="83332-Rv2112c"/>
<dbReference type="GeneID" id="888290"/>
<dbReference type="KEGG" id="mtu:Rv2112c"/>
<dbReference type="PATRIC" id="fig|83332.12.peg.2359"/>
<dbReference type="TubercuList" id="Rv2112c"/>
<dbReference type="eggNOG" id="COG4122">
    <property type="taxonomic scope" value="Bacteria"/>
</dbReference>
<dbReference type="InParanoid" id="P9WNU9"/>
<dbReference type="OrthoDB" id="9760627at2"/>
<dbReference type="BioCyc" id="MetaCyc:G185E-6318-MONOMER"/>
<dbReference type="BRENDA" id="3.5.1.119">
    <property type="organism ID" value="3445"/>
</dbReference>
<dbReference type="UniPathway" id="UPA00997"/>
<dbReference type="Proteomes" id="UP000001584">
    <property type="component" value="Chromosome"/>
</dbReference>
<dbReference type="GO" id="GO:0005524">
    <property type="term" value="F:ATP binding"/>
    <property type="evidence" value="ECO:0000314"/>
    <property type="project" value="UniProtKB"/>
</dbReference>
<dbReference type="GO" id="GO:0016811">
    <property type="term" value="F:hydrolase activity, acting on carbon-nitrogen (but not peptide) bonds, in linear amides"/>
    <property type="evidence" value="ECO:0000314"/>
    <property type="project" value="UniProtKB"/>
</dbReference>
<dbReference type="GO" id="GO:0046872">
    <property type="term" value="F:metal ion binding"/>
    <property type="evidence" value="ECO:0007669"/>
    <property type="project" value="UniProtKB-KW"/>
</dbReference>
<dbReference type="GO" id="GO:0008233">
    <property type="term" value="F:peptidase activity"/>
    <property type="evidence" value="ECO:0000314"/>
    <property type="project" value="MTBBASE"/>
</dbReference>
<dbReference type="GO" id="GO:0019941">
    <property type="term" value="P:modification-dependent protein catabolic process"/>
    <property type="evidence" value="ECO:0000314"/>
    <property type="project" value="MTBBASE"/>
</dbReference>
<dbReference type="GO" id="GO:0010498">
    <property type="term" value="P:proteasomal protein catabolic process"/>
    <property type="evidence" value="ECO:0000314"/>
    <property type="project" value="MTBBASE"/>
</dbReference>
<dbReference type="GO" id="GO:0070490">
    <property type="term" value="P:protein pupylation"/>
    <property type="evidence" value="ECO:0000314"/>
    <property type="project" value="UniProtKB"/>
</dbReference>
<dbReference type="InterPro" id="IPR022366">
    <property type="entry name" value="Pup_deamidase"/>
</dbReference>
<dbReference type="InterPro" id="IPR004347">
    <property type="entry name" value="Pup_ligase/deamidase"/>
</dbReference>
<dbReference type="NCBIfam" id="TIGR03688">
    <property type="entry name" value="depupylase_Dop"/>
    <property type="match status" value="1"/>
</dbReference>
<dbReference type="PANTHER" id="PTHR42307">
    <property type="entry name" value="PUP DEAMIDASE/DEPUPYLASE"/>
    <property type="match status" value="1"/>
</dbReference>
<dbReference type="PANTHER" id="PTHR42307:SF2">
    <property type="entry name" value="PUP DEAMIDASE_DEPUPYLASE"/>
    <property type="match status" value="1"/>
</dbReference>
<dbReference type="Pfam" id="PF03136">
    <property type="entry name" value="Pup_ligase"/>
    <property type="match status" value="1"/>
</dbReference>
<dbReference type="PIRSF" id="PIRSF018077">
    <property type="entry name" value="UCP018077"/>
    <property type="match status" value="1"/>
</dbReference>
<proteinExistence type="evidence at protein level"/>
<evidence type="ECO:0000250" key="1"/>
<evidence type="ECO:0000269" key="2">
    <source>
    </source>
</evidence>
<evidence type="ECO:0000269" key="3">
    <source>
    </source>
</evidence>
<evidence type="ECO:0000269" key="4">
    <source>
    </source>
</evidence>
<evidence type="ECO:0000305" key="5"/>
<evidence type="ECO:0007829" key="6">
    <source>
        <dbReference type="PDB" id="9CKU"/>
    </source>
</evidence>
<keyword id="KW-0002">3D-structure</keyword>
<keyword id="KW-0067">ATP-binding</keyword>
<keyword id="KW-0378">Hydrolase</keyword>
<keyword id="KW-0460">Magnesium</keyword>
<keyword id="KW-0479">Metal-binding</keyword>
<keyword id="KW-0547">Nucleotide-binding</keyword>
<keyword id="KW-1185">Reference proteome</keyword>
<keyword id="KW-0843">Virulence</keyword>
<sequence length="505" mass="55179">MQRIIGTEVEYGISSPSDPTANPILTSTQAVLAYAAAAGIQRAKRTRWDYEVESPLRDARGFDLSRSAGPPPVVDADEVGAANMILTNGARLYVDHAHPEYSAPECTDPLDAVIWDKAGERVMEAAARHVASVPGAAKLQLYKNNVDGKGASYGSHENYLMSRQTPFSAIITGLTPFLVSRQVVTGSGRVGIGPSGDEPGFQLSQRSDYIEVEVGLETTLKRGIINTRDEPHADADRYRRLHVIIGDANLAETSTYLKLGTTALVLDLIEEGPAHAIDLTDLALARPVHAVHAISRDPSLRATVALADGRELTGLALQRIYLDRVAKLVDSRDPDPRAADIVETWAHVLDQLERDPMDCAELLDWPAKLRLLDGFRQRENLSWSAPRLHLVDLQYSDVRLDKGLYNRLVARGSMKRLVTEHQVLSAVENPPTDTRAYFRGECLRRFGADIAAASWDSVIFDLGGDSLVRIPTLEPLRGSKAHVGALLDSVDSAVELVEQLTAEPR</sequence>
<gene>
    <name type="primary">dop</name>
    <name type="synonym">pafD</name>
    <name type="ordered locus">Rv2112c</name>
</gene>
<reference key="1">
    <citation type="journal article" date="1998" name="Nature">
        <title>Deciphering the biology of Mycobacterium tuberculosis from the complete genome sequence.</title>
        <authorList>
            <person name="Cole S.T."/>
            <person name="Brosch R."/>
            <person name="Parkhill J."/>
            <person name="Garnier T."/>
            <person name="Churcher C.M."/>
            <person name="Harris D.E."/>
            <person name="Gordon S.V."/>
            <person name="Eiglmeier K."/>
            <person name="Gas S."/>
            <person name="Barry C.E. III"/>
            <person name="Tekaia F."/>
            <person name="Badcock K."/>
            <person name="Basham D."/>
            <person name="Brown D."/>
            <person name="Chillingworth T."/>
            <person name="Connor R."/>
            <person name="Davies R.M."/>
            <person name="Devlin K."/>
            <person name="Feltwell T."/>
            <person name="Gentles S."/>
            <person name="Hamlin N."/>
            <person name="Holroyd S."/>
            <person name="Hornsby T."/>
            <person name="Jagels K."/>
            <person name="Krogh A."/>
            <person name="McLean J."/>
            <person name="Moule S."/>
            <person name="Murphy L.D."/>
            <person name="Oliver S."/>
            <person name="Osborne J."/>
            <person name="Quail M.A."/>
            <person name="Rajandream M.A."/>
            <person name="Rogers J."/>
            <person name="Rutter S."/>
            <person name="Seeger K."/>
            <person name="Skelton S."/>
            <person name="Squares S."/>
            <person name="Squares R."/>
            <person name="Sulston J.E."/>
            <person name="Taylor K."/>
            <person name="Whitehead S."/>
            <person name="Barrell B.G."/>
        </authorList>
    </citation>
    <scope>NUCLEOTIDE SEQUENCE [LARGE SCALE GENOMIC DNA]</scope>
    <source>
        <strain>ATCC 25618 / H37Rv</strain>
    </source>
</reference>
<reference key="2">
    <citation type="journal article" date="2009" name="Nat. Struct. Mol. Biol.">
        <title>Bacterial ubiquitin-like modifier Pup is deamidated and conjugated to substrates by distinct but homologous enzymes.</title>
        <authorList>
            <person name="Striebel F."/>
            <person name="Imkamp F."/>
            <person name="Sutter M."/>
            <person name="Steiner M."/>
            <person name="Mamedov A."/>
            <person name="Weber-Ban E."/>
        </authorList>
    </citation>
    <scope>FUNCTION AS PUP DEAMIDASE</scope>
    <scope>CATALYTIC ACTIVITY</scope>
    <scope>COFACTOR</scope>
    <scope>INTERACTION WITH PUP</scope>
    <scope>IDENTIFICATION BY MASS SPECTROMETRY</scope>
    <source>
        <strain>ATCC 25618 / H37Rv</strain>
    </source>
</reference>
<reference key="3">
    <citation type="journal article" date="2010" name="Mol. Cell">
        <title>'Depupylation' of prokaryotic ubiquitin-like protein from mycobacterial proteasome substrates.</title>
        <authorList>
            <person name="Burns K.E."/>
            <person name="Cerda-Maira F.A."/>
            <person name="Wang T."/>
            <person name="Li H."/>
            <person name="Bishai W.R."/>
            <person name="Darwin K.H."/>
        </authorList>
    </citation>
    <scope>FUNCTION AS DEPUPYLASE</scope>
    <scope>CATALYTIC ACTIVITY</scope>
    <scope>COFACTOR</scope>
    <scope>DISRUPTION PHENOTYPE</scope>
    <scope>MUTAGENESIS OF GLU-10</scope>
</reference>
<reference key="4">
    <citation type="journal article" date="2010" name="Mol. Microbiol.">
        <title>Molecular analysis of the prokaryotic ubiquitin-like protein (Pup) conjugation pathway in Mycobacterium tuberculosis.</title>
        <authorList>
            <person name="Cerda-Maira F.A."/>
            <person name="Pearce M.J."/>
            <person name="Fuortes M."/>
            <person name="Bishai W.R."/>
            <person name="Hubbard S.R."/>
            <person name="Darwin K.H."/>
        </authorList>
    </citation>
    <scope>FUNCTION IN PUP RECYCLING</scope>
    <scope>ROLE IN PUPYLATION; RESISTANCE TO RNI AND VIRULENCE</scope>
    <scope>DISRUPTION PHENOTYPE</scope>
    <scope>INTERACTION WITH PUP</scope>
    <scope>MUTAGENESIS OF GLU-8; GLU-10; ASP-95; HIS-96; GLU-100; ARG-206 AND ARG-222</scope>
</reference>
<reference key="5">
    <citation type="journal article" date="2011" name="Mol. Cell. Proteomics">
        <title>Proteogenomic analysis of Mycobacterium tuberculosis by high resolution mass spectrometry.</title>
        <authorList>
            <person name="Kelkar D.S."/>
            <person name="Kumar D."/>
            <person name="Kumar P."/>
            <person name="Balakrishnan L."/>
            <person name="Muthusamy B."/>
            <person name="Yadav A.K."/>
            <person name="Shrivastava P."/>
            <person name="Marimuthu A."/>
            <person name="Anand S."/>
            <person name="Sundaram H."/>
            <person name="Kingsbury R."/>
            <person name="Harsha H.C."/>
            <person name="Nair B."/>
            <person name="Prasad T.S."/>
            <person name="Chauhan D.S."/>
            <person name="Katoch K."/>
            <person name="Katoch V.M."/>
            <person name="Kumar P."/>
            <person name="Chaerkady R."/>
            <person name="Ramachandran S."/>
            <person name="Dash D."/>
            <person name="Pandey A."/>
        </authorList>
    </citation>
    <scope>IDENTIFICATION BY MASS SPECTROMETRY [LARGE SCALE ANALYSIS]</scope>
    <source>
        <strain>ATCC 25618 / H37Rv</strain>
    </source>
</reference>
<protein>
    <recommendedName>
        <fullName>Pup deamidase/depupylase</fullName>
        <ecNumber>3.4.-.-</ecNumber>
        <ecNumber evidence="2 4">3.5.1.119</ecNumber>
    </recommendedName>
    <alternativeName>
        <fullName>Deamidase of protein Pup</fullName>
    </alternativeName>
</protein>
<organism>
    <name type="scientific">Mycobacterium tuberculosis (strain ATCC 25618 / H37Rv)</name>
    <dbReference type="NCBI Taxonomy" id="83332"/>
    <lineage>
        <taxon>Bacteria</taxon>
        <taxon>Bacillati</taxon>
        <taxon>Actinomycetota</taxon>
        <taxon>Actinomycetes</taxon>
        <taxon>Mycobacteriales</taxon>
        <taxon>Mycobacteriaceae</taxon>
        <taxon>Mycobacterium</taxon>
        <taxon>Mycobacterium tuberculosis complex</taxon>
    </lineage>
</organism>
<feature type="chain" id="PRO_0000383480" description="Pup deamidase/depupylase">
    <location>
        <begin position="1"/>
        <end position="505"/>
    </location>
</feature>
<feature type="active site" description="Proton acceptor" evidence="1">
    <location>
        <position position="95"/>
    </location>
</feature>
<feature type="binding site" evidence="1">
    <location>
        <begin position="6"/>
        <end position="10"/>
    </location>
    <ligand>
        <name>ATP</name>
        <dbReference type="ChEBI" id="CHEBI:30616"/>
    </ligand>
</feature>
<feature type="binding site" evidence="1">
    <location>
        <position position="8"/>
    </location>
    <ligand>
        <name>Mg(2+)</name>
        <dbReference type="ChEBI" id="CHEBI:18420"/>
        <label>1</label>
    </ligand>
</feature>
<feature type="binding site" evidence="1">
    <location>
        <position position="8"/>
    </location>
    <ligand>
        <name>Mg(2+)</name>
        <dbReference type="ChEBI" id="CHEBI:18420"/>
        <label>2</label>
    </ligand>
</feature>
<feature type="binding site" evidence="1">
    <location>
        <position position="93"/>
    </location>
    <ligand>
        <name>Mg(2+)</name>
        <dbReference type="ChEBI" id="CHEBI:18420"/>
        <label>1</label>
    </ligand>
</feature>
<feature type="binding site" evidence="1">
    <location>
        <position position="100"/>
    </location>
    <ligand>
        <name>Mg(2+)</name>
        <dbReference type="ChEBI" id="CHEBI:18420"/>
        <label>1</label>
    </ligand>
</feature>
<feature type="binding site" evidence="1">
    <location>
        <begin position="102"/>
        <end position="103"/>
    </location>
    <ligand>
        <name>ATP</name>
        <dbReference type="ChEBI" id="CHEBI:30616"/>
    </ligand>
</feature>
<feature type="binding site" evidence="1">
    <location>
        <position position="156"/>
    </location>
    <ligand>
        <name>Mg(2+)</name>
        <dbReference type="ChEBI" id="CHEBI:18420"/>
        <label>2</label>
    </ligand>
</feature>
<feature type="binding site" evidence="1">
    <location>
        <position position="158"/>
    </location>
    <ligand>
        <name>ATP</name>
        <dbReference type="ChEBI" id="CHEBI:30616"/>
    </ligand>
</feature>
<feature type="binding site" evidence="1">
    <location>
        <position position="240"/>
    </location>
    <ligand>
        <name>ATP</name>
        <dbReference type="ChEBI" id="CHEBI:30616"/>
    </ligand>
</feature>
<feature type="binding site" evidence="1">
    <location>
        <position position="242"/>
    </location>
    <ligand>
        <name>Mg(2+)</name>
        <dbReference type="ChEBI" id="CHEBI:18420"/>
        <label>2</label>
    </ligand>
</feature>
<feature type="mutagenesis site" description="Abolishes pupylation." evidence="3">
    <original>E</original>
    <variation>A</variation>
    <location>
        <position position="8"/>
    </location>
</feature>
<feature type="mutagenesis site" description="Abolishes pupylation and depupylase activity." evidence="3 4">
    <original>E</original>
    <variation>A</variation>
    <location>
        <position position="10"/>
    </location>
</feature>
<feature type="mutagenesis site" description="Abolishes pupylation." evidence="3">
    <original>D</original>
    <variation>N</variation>
    <location>
        <position position="95"/>
    </location>
</feature>
<feature type="mutagenesis site" description="Abolishes pupylation." evidence="3">
    <original>H</original>
    <variation>V</variation>
    <location>
        <position position="96"/>
    </location>
</feature>
<feature type="mutagenesis site" description="Abolishes pupylation." evidence="3">
    <original>E</original>
    <variation>A</variation>
    <location>
        <position position="100"/>
    </location>
</feature>
<feature type="mutagenesis site" description="Abolishes pupylation." evidence="3">
    <original>R</original>
    <variation>A</variation>
    <location>
        <position position="206"/>
    </location>
</feature>
<feature type="mutagenesis site" description="Abolishes pupylation." evidence="3">
    <original>R</original>
    <variation>A</variation>
    <location>
        <position position="222"/>
    </location>
</feature>
<feature type="strand" evidence="6">
    <location>
        <begin position="5"/>
        <end position="10"/>
    </location>
</feature>
<feature type="strand" evidence="6">
    <location>
        <begin position="12"/>
        <end position="14"/>
    </location>
</feature>
<feature type="helix" evidence="6">
    <location>
        <begin position="23"/>
        <end position="38"/>
    </location>
</feature>
<feature type="strand" evidence="6">
    <location>
        <begin position="87"/>
        <end position="89"/>
    </location>
</feature>
<feature type="strand" evidence="6">
    <location>
        <begin position="91"/>
        <end position="95"/>
    </location>
</feature>
<feature type="strand" evidence="6">
    <location>
        <begin position="98"/>
        <end position="102"/>
    </location>
</feature>
<feature type="strand" evidence="6">
    <location>
        <begin position="106"/>
        <end position="108"/>
    </location>
</feature>
<feature type="helix" evidence="6">
    <location>
        <begin position="109"/>
        <end position="131"/>
    </location>
</feature>
<feature type="strand" evidence="6">
    <location>
        <begin position="140"/>
        <end position="142"/>
    </location>
</feature>
<feature type="strand" evidence="6">
    <location>
        <begin position="148"/>
        <end position="150"/>
    </location>
</feature>
<feature type="strand" evidence="6">
    <location>
        <begin position="155"/>
        <end position="162"/>
    </location>
</feature>
<feature type="helix" evidence="6">
    <location>
        <begin position="167"/>
        <end position="180"/>
    </location>
</feature>
<feature type="helix" evidence="6">
    <location>
        <begin position="182"/>
        <end position="185"/>
    </location>
</feature>
<feature type="strand" evidence="6">
    <location>
        <begin position="189"/>
        <end position="193"/>
    </location>
</feature>
<feature type="strand" evidence="6">
    <location>
        <begin position="198"/>
        <end position="203"/>
    </location>
</feature>
<feature type="helix" evidence="6">
    <location>
        <begin position="206"/>
        <end position="209"/>
    </location>
</feature>
<feature type="strand" evidence="6">
    <location>
        <begin position="210"/>
        <end position="216"/>
    </location>
</feature>
<feature type="strand" evidence="6">
    <location>
        <begin position="218"/>
        <end position="226"/>
    </location>
</feature>
<feature type="turn" evidence="6">
    <location>
        <begin position="235"/>
        <end position="237"/>
    </location>
</feature>
<feature type="strand" evidence="6">
    <location>
        <begin position="238"/>
        <end position="243"/>
    </location>
</feature>
<feature type="helix" evidence="6">
    <location>
        <begin position="252"/>
        <end position="270"/>
    </location>
</feature>
<feature type="helix" evidence="6">
    <location>
        <begin position="280"/>
        <end position="282"/>
    </location>
</feature>
<feature type="helix" evidence="6">
    <location>
        <begin position="287"/>
        <end position="295"/>
    </location>
</feature>
<feature type="strand" evidence="6">
    <location>
        <begin position="303"/>
        <end position="306"/>
    </location>
</feature>
<feature type="strand" evidence="6">
    <location>
        <begin position="311"/>
        <end position="313"/>
    </location>
</feature>
<feature type="helix" evidence="6">
    <location>
        <begin position="314"/>
        <end position="330"/>
    </location>
</feature>
<feature type="helix" evidence="6">
    <location>
        <begin position="336"/>
        <end position="354"/>
    </location>
</feature>
<feature type="helix" evidence="6">
    <location>
        <begin position="356"/>
        <end position="359"/>
    </location>
</feature>
<feature type="turn" evidence="6">
    <location>
        <begin position="360"/>
        <end position="362"/>
    </location>
</feature>
<feature type="helix" evidence="6">
    <location>
        <begin position="364"/>
        <end position="379"/>
    </location>
</feature>
<feature type="helix" evidence="6">
    <location>
        <begin position="386"/>
        <end position="395"/>
    </location>
</feature>
<feature type="turn" evidence="6">
    <location>
        <begin position="400"/>
        <end position="402"/>
    </location>
</feature>
<feature type="helix" evidence="6">
    <location>
        <begin position="404"/>
        <end position="410"/>
    </location>
</feature>
<feature type="helix" evidence="6">
    <location>
        <begin position="420"/>
        <end position="426"/>
    </location>
</feature>